<organism evidence="11">
    <name type="scientific">Caenorhabditis elegans</name>
    <dbReference type="NCBI Taxonomy" id="6239"/>
    <lineage>
        <taxon>Eukaryota</taxon>
        <taxon>Metazoa</taxon>
        <taxon>Ecdysozoa</taxon>
        <taxon>Nematoda</taxon>
        <taxon>Chromadorea</taxon>
        <taxon>Rhabditida</taxon>
        <taxon>Rhabditina</taxon>
        <taxon>Rhabditomorpha</taxon>
        <taxon>Rhabditoidea</taxon>
        <taxon>Rhabditidae</taxon>
        <taxon>Peloderinae</taxon>
        <taxon>Caenorhabditis</taxon>
    </lineage>
</organism>
<keyword id="KW-0025">Alternative splicing</keyword>
<keyword id="KW-0479">Metal-binding</keyword>
<keyword id="KW-0539">Nucleus</keyword>
<keyword id="KW-1185">Reference proteome</keyword>
<keyword id="KW-0804">Transcription</keyword>
<keyword id="KW-0805">Transcription regulation</keyword>
<keyword id="KW-0862">Zinc</keyword>
<keyword id="KW-0863">Zinc-finger</keyword>
<feature type="chain" id="PRO_0000457977" description="Putative transcription factor egl-18">
    <location>
        <begin position="1"/>
        <end position="376"/>
    </location>
</feature>
<feature type="zinc finger region" description="GATA-type" evidence="1">
    <location>
        <begin position="266"/>
        <end position="290"/>
    </location>
</feature>
<feature type="region of interest" description="Disordered" evidence="2">
    <location>
        <begin position="1"/>
        <end position="33"/>
    </location>
</feature>
<feature type="region of interest" description="Disordered" evidence="2">
    <location>
        <begin position="65"/>
        <end position="122"/>
    </location>
</feature>
<feature type="region of interest" description="Disordered" evidence="2">
    <location>
        <begin position="148"/>
        <end position="197"/>
    </location>
</feature>
<feature type="region of interest" description="Disordered" evidence="2">
    <location>
        <begin position="240"/>
        <end position="264"/>
    </location>
</feature>
<feature type="compositionally biased region" description="Basic and acidic residues" evidence="2">
    <location>
        <begin position="9"/>
        <end position="27"/>
    </location>
</feature>
<feature type="compositionally biased region" description="Low complexity" evidence="2">
    <location>
        <begin position="68"/>
        <end position="89"/>
    </location>
</feature>
<feature type="compositionally biased region" description="Low complexity" evidence="2">
    <location>
        <begin position="165"/>
        <end position="175"/>
    </location>
</feature>
<feature type="compositionally biased region" description="Basic and acidic residues" evidence="2">
    <location>
        <begin position="176"/>
        <end position="195"/>
    </location>
</feature>
<feature type="compositionally biased region" description="Polar residues" evidence="2">
    <location>
        <begin position="241"/>
        <end position="250"/>
    </location>
</feature>
<feature type="splice variant" id="VSP_061875" description="In isoform b." evidence="10">
    <original>A</original>
    <variation>AFFQ</variation>
    <location>
        <position position="219"/>
    </location>
</feature>
<feature type="mutagenesis site" description="In n475; lethality with 45% surviving animals. L1 larvae have breaks in alae and a twisted body. L4 larvae have defective vulval openings, which may go on to develop into the protruding vulva (Pvl) phenotype in surviving adults." evidence="4">
    <location>
        <begin position="34"/>
        <end position="376"/>
    </location>
</feature>
<feature type="mutagenesis site" description="In ga97; lethality with 18% surviving animals. Reduces expression of lin-39 in the embryo. Suppresses an increase in seam cell number caused by simultaneous RNAi-mediated knockdown of pop-1 at the L1 larval stage." evidence="4 7 8">
    <location>
        <begin position="193"/>
        <end position="376"/>
    </location>
</feature>
<feature type="mutagenesis site" description="In n162; lethality with 43% surviving animals. Reduces expression of lin-39 in the embryo. Suppresses an increase in seam cell number caused by simultaneous RNAi-mediated knockdown of pop-1 at the L1 larval stage. Reduces the average number of seam cells per side; reduced further either by simultaneous RNAi-mediated knockdown of elt-6, or egl-18, at the L1 stage." evidence="4 7 8">
    <location>
        <begin position="245"/>
        <end position="376"/>
    </location>
</feature>
<gene>
    <name evidence="14" type="primary">egl-18</name>
    <name evidence="9" type="synonym">elt-5</name>
    <name evidence="14" type="synonym">pvl-3</name>
    <name evidence="14" type="ORF">F55A8.1</name>
</gene>
<sequence length="376" mass="41754">MSISIMTETRPESAEQQHHEVLQRPSDEPCSGCKQLQKDVAKTISMVMERMDKLQYRLDELLKENNELKSSSVSSGKASPSPAESRSSPKLVETVVAPVSGARKRKPKERSPPAAASPLPDFSNLMNGFMFDPLNMSNPNGMMQLLSMVQQQQQQQQHHQHIENQQSVSPPQSKSVKIEDPMDQDVKQEESERSDIPTATEAQNLLDALTAQFSSNGQATSTTSPPSSSSQVQAVIEAVATPSSQSQDSSMFEKTETSGDPNAARCSNCRTDKTTAWRRDAEGKLVCNPCGLYYRLHKVRRPIEMRKNHIQQRYRRKNKEKESSAATQIFNQLLTQMPTMATGGVSTDGAINTFNLLEQISQFTQAQELMNSSATF</sequence>
<protein>
    <recommendedName>
        <fullName evidence="10">Putative transcription factor egl-18</fullName>
    </recommendedName>
    <alternativeName>
        <fullName evidence="14">Egg laying defective egl-18</fullName>
    </alternativeName>
    <alternativeName>
        <fullName evidence="10">Erythroid-like transcription factor family egl-18</fullName>
    </alternativeName>
</protein>
<accession>G5EGF4</accession>
<accession>Q6S9C1</accession>
<accession>U4PMB4</accession>
<dbReference type="EMBL" id="AF353302">
    <property type="protein sequence ID" value="AAK32716.1"/>
    <property type="molecule type" value="mRNA"/>
</dbReference>
<dbReference type="EMBL" id="AY462219">
    <property type="protein sequence ID" value="AAR26006.1"/>
    <property type="molecule type" value="mRNA"/>
</dbReference>
<dbReference type="EMBL" id="BX284604">
    <property type="protein sequence ID" value="CCD71858.1"/>
    <property type="molecule type" value="Genomic_DNA"/>
</dbReference>
<dbReference type="EMBL" id="BX284604">
    <property type="protein sequence ID" value="CDH93220.1"/>
    <property type="molecule type" value="Genomic_DNA"/>
</dbReference>
<dbReference type="PIR" id="E88640">
    <property type="entry name" value="E88640"/>
</dbReference>
<dbReference type="RefSeq" id="NP_001294448.1">
    <molecule id="G5EGF4-2"/>
    <property type="nucleotide sequence ID" value="NM_001307519.4"/>
</dbReference>
<dbReference type="RefSeq" id="NP_500143.1">
    <molecule id="G5EGF4-1"/>
    <property type="nucleotide sequence ID" value="NM_067742.8"/>
</dbReference>
<dbReference type="SMR" id="G5EGF4"/>
<dbReference type="FunCoup" id="G5EGF4">
    <property type="interactions" value="372"/>
</dbReference>
<dbReference type="IntAct" id="G5EGF4">
    <property type="interactions" value="6"/>
</dbReference>
<dbReference type="STRING" id="6239.F55A8.1b.1"/>
<dbReference type="PaxDb" id="6239-F55A8.1b"/>
<dbReference type="PeptideAtlas" id="G5EGF4"/>
<dbReference type="EnsemblMetazoa" id="F55A8.1a.1">
    <molecule id="G5EGF4-1"/>
    <property type="protein sequence ID" value="F55A8.1a.1"/>
    <property type="gene ID" value="WBGene00001186"/>
</dbReference>
<dbReference type="EnsemblMetazoa" id="F55A8.1a.2">
    <molecule id="G5EGF4-1"/>
    <property type="protein sequence ID" value="F55A8.1a.2"/>
    <property type="gene ID" value="WBGene00001186"/>
</dbReference>
<dbReference type="EnsemblMetazoa" id="F55A8.1b.1">
    <molecule id="G5EGF4-2"/>
    <property type="protein sequence ID" value="F55A8.1b.1"/>
    <property type="gene ID" value="WBGene00001186"/>
</dbReference>
<dbReference type="GeneID" id="176992"/>
<dbReference type="KEGG" id="cel:CELE_F55A8.1"/>
<dbReference type="AGR" id="WB:WBGene00001186"/>
<dbReference type="CTD" id="176992"/>
<dbReference type="WormBase" id="F55A8.1a">
    <molecule id="G5EGF4-1"/>
    <property type="protein sequence ID" value="CE28339"/>
    <property type="gene ID" value="WBGene00001186"/>
    <property type="gene designation" value="egl-18"/>
</dbReference>
<dbReference type="WormBase" id="F55A8.1b">
    <molecule id="G5EGF4-2"/>
    <property type="protein sequence ID" value="CE48960"/>
    <property type="gene ID" value="WBGene00001186"/>
    <property type="gene designation" value="egl-18"/>
</dbReference>
<dbReference type="eggNOG" id="KOG1601">
    <property type="taxonomic scope" value="Eukaryota"/>
</dbReference>
<dbReference type="HOGENOM" id="CLU_685583_0_0_1"/>
<dbReference type="OMA" id="PCGLYYR"/>
<dbReference type="OrthoDB" id="515401at2759"/>
<dbReference type="Reactome" id="R-CEL-5683826">
    <property type="pathway name" value="Surfactant metabolism"/>
</dbReference>
<dbReference type="Reactome" id="R-CEL-8936459">
    <property type="pathway name" value="RUNX1 regulates genes involved in megakaryocyte differentiation and platelet function"/>
</dbReference>
<dbReference type="PRO" id="PR:G5EGF4"/>
<dbReference type="Proteomes" id="UP000001940">
    <property type="component" value="Chromosome IV"/>
</dbReference>
<dbReference type="Bgee" id="WBGene00001186">
    <property type="expression patterns" value="Expressed in pharyngeal muscle cell (C elegans) and 10 other cell types or tissues"/>
</dbReference>
<dbReference type="ExpressionAtlas" id="G5EGF4">
    <property type="expression patterns" value="baseline and differential"/>
</dbReference>
<dbReference type="GO" id="GO:0005634">
    <property type="term" value="C:nucleus"/>
    <property type="evidence" value="ECO:0000314"/>
    <property type="project" value="WormBase"/>
</dbReference>
<dbReference type="GO" id="GO:0003700">
    <property type="term" value="F:DNA-binding transcription factor activity"/>
    <property type="evidence" value="ECO:0000250"/>
    <property type="project" value="WormBase"/>
</dbReference>
<dbReference type="GO" id="GO:0000981">
    <property type="term" value="F:DNA-binding transcription factor activity, RNA polymerase II-specific"/>
    <property type="evidence" value="ECO:0000318"/>
    <property type="project" value="GO_Central"/>
</dbReference>
<dbReference type="GO" id="GO:0000978">
    <property type="term" value="F:RNA polymerase II cis-regulatory region sequence-specific DNA binding"/>
    <property type="evidence" value="ECO:0000318"/>
    <property type="project" value="GO_Central"/>
</dbReference>
<dbReference type="GO" id="GO:0008270">
    <property type="term" value="F:zinc ion binding"/>
    <property type="evidence" value="ECO:0007669"/>
    <property type="project" value="UniProtKB-KW"/>
</dbReference>
<dbReference type="GO" id="GO:0045165">
    <property type="term" value="P:cell fate commitment"/>
    <property type="evidence" value="ECO:0000318"/>
    <property type="project" value="GO_Central"/>
</dbReference>
<dbReference type="GO" id="GO:0001708">
    <property type="term" value="P:cell fate specification"/>
    <property type="evidence" value="ECO:0000315"/>
    <property type="project" value="WormBase"/>
</dbReference>
<dbReference type="GO" id="GO:0061025">
    <property type="term" value="P:membrane fusion"/>
    <property type="evidence" value="ECO:0000315"/>
    <property type="project" value="WormBase"/>
</dbReference>
<dbReference type="GO" id="GO:0000122">
    <property type="term" value="P:negative regulation of transcription by RNA polymerase II"/>
    <property type="evidence" value="ECO:0000318"/>
    <property type="project" value="GO_Central"/>
</dbReference>
<dbReference type="GO" id="GO:0002119">
    <property type="term" value="P:nematode larval development"/>
    <property type="evidence" value="ECO:0000315"/>
    <property type="project" value="WormBase"/>
</dbReference>
<dbReference type="GO" id="GO:0045944">
    <property type="term" value="P:positive regulation of transcription by RNA polymerase II"/>
    <property type="evidence" value="ECO:0000318"/>
    <property type="project" value="GO_Central"/>
</dbReference>
<dbReference type="CDD" id="cd00202">
    <property type="entry name" value="ZnF_GATA"/>
    <property type="match status" value="1"/>
</dbReference>
<dbReference type="Gene3D" id="3.30.50.10">
    <property type="entry name" value="Erythroid Transcription Factor GATA-1, subunit A"/>
    <property type="match status" value="1"/>
</dbReference>
<dbReference type="InterPro" id="IPR039355">
    <property type="entry name" value="Transcription_factor_GATA"/>
</dbReference>
<dbReference type="InterPro" id="IPR000679">
    <property type="entry name" value="Znf_GATA"/>
</dbReference>
<dbReference type="InterPro" id="IPR013088">
    <property type="entry name" value="Znf_NHR/GATA"/>
</dbReference>
<dbReference type="PANTHER" id="PTHR10071:SF155">
    <property type="entry name" value="TRANSCRIPTION FACTOR EGL-18-RELATED"/>
    <property type="match status" value="1"/>
</dbReference>
<dbReference type="PANTHER" id="PTHR10071">
    <property type="entry name" value="TRANSCRIPTION FACTOR GATA FAMILY MEMBER"/>
    <property type="match status" value="1"/>
</dbReference>
<dbReference type="Pfam" id="PF00320">
    <property type="entry name" value="GATA"/>
    <property type="match status" value="1"/>
</dbReference>
<dbReference type="PRINTS" id="PR00619">
    <property type="entry name" value="GATAZNFINGER"/>
</dbReference>
<dbReference type="SMART" id="SM00401">
    <property type="entry name" value="ZnF_GATA"/>
    <property type="match status" value="1"/>
</dbReference>
<dbReference type="SUPFAM" id="SSF57716">
    <property type="entry name" value="Glucocorticoid receptor-like (DNA-binding domain)"/>
    <property type="match status" value="1"/>
</dbReference>
<dbReference type="PROSITE" id="PS50114">
    <property type="entry name" value="GATA_ZN_FINGER_2"/>
    <property type="match status" value="1"/>
</dbReference>
<comment type="function">
    <text evidence="3 4 5 6 7 9">Probable transcription factor (PubMed:11532911, PubMed:24885717). Involved in embryonic development and in vulval development in larvae, acting redundantly, at least in part, with elt-6 (PubMed:11532911, PubMed:12399309, PubMed:14975731, PubMed:24885717). Perhaps acting together with elt-6, may form a positive feedback loop to initiate and maintain lin-39 gene expression to ensure proper vulval precursor cell (VPC) fate specification (PubMed:24885717). Together with elt-6, acts as a downstream target of the Wnt/beta-catenin asymmetry pathway, required to adopt or maintain the seam cell fate (PubMed:23633508). Required in seam cells, acting redundantly with elt-6, to promote production of alae, expression of several seam-specific genes and maintenance of seam cells in an unfused state (PubMed:11532911, PubMed:23633508). Plays a role in longevity (PubMed:18662544). May form a transcriptional circuit with GATA factors elt-3 and elt-6 (PubMed:18662544).</text>
</comment>
<comment type="subcellular location">
    <subcellularLocation>
        <location evidence="10">Nucleus</location>
    </subcellularLocation>
</comment>
<comment type="alternative products">
    <event type="alternative splicing"/>
    <isoform>
        <id>G5EGF4-1</id>
        <name evidence="14">a</name>
        <sequence type="displayed"/>
    </isoform>
    <isoform>
        <id>G5EGF4-2</id>
        <name evidence="15">b</name>
        <sequence type="described" ref="VSP_061875"/>
    </isoform>
</comment>
<comment type="tissue specificity">
    <text evidence="6 7">Expressed in differentiated seam cells (PubMed:23633508). Expressed in the head and trunk (PubMed:18662544).</text>
</comment>
<comment type="developmental stage">
    <text evidence="3 4 6 7">Expressed in all seam cells and in many other cells in the head and tail regions at embryonic ~1.5-fold and ~threefold stages (at protein level) (PubMed:11532911). Expressed in the vulval precursor cell (VPC) lineages and in VC neurons, starting at about the mid-L2 larval stage (PubMed:12399309). Expressed asymmetrically in seam cell daughters during larval life; expression is highest in the posterior daughter and lower in the anterior daughter cell after the L1 cell division (PubMed:23633508). However, in early stage L2, expression is symmetric in the seam-fated daughters of the first division (PubMed:23633508). Expression in the head and trunk increases with age between days 2 and 12 (PubMed:18662544).</text>
</comment>
<comment type="disruption phenotype">
    <text evidence="3 6 8">RNAi-mediated knockdown in hermaphrodites causes their progeny to arrest late in embryogenesis (pretzel stage) or as early L1 larvae (PubMed:11532911). Arrested L1 larvae are invariably uncoordinated, lumpy and somewhat short and stout (PubMed:11532911). Also, the entire larval buccal capsule, the cuticular structure of the mouth, invariably fails to attach to the anterior-most region of the head (PubMed:11532911). RNAi-mediated knockdown at day 5 of adulthood (earlier RNAi treatment causes worms to become sick) causes extended longevity and also increases expression of elt-3 in the trunk hypodermis; longevity effect is suppressed in an elt-3 mutant background (PubMed:18662544). Knockdown at day 5 of adulthood slightly increases resistance to heat shock and to paraquat treatment (PubMed:18662544). RNAi-mediated knockdown at the L1 stage reduces the average number of seam cells per side; reduced further in an elt-6 mutant background (PubMed:11532911). RNAi-mediated knockdown at the L3 stage in an elt-6 mutant background reduces expression of lin-39.</text>
</comment>
<comment type="caution">
    <text evidence="3">Not only are egl-18/elt-5 and elt-6 moderately similar (46% identical) paralogous genes, but they may be transcribed both monocistronically and dicistronically in a tissue-dependent manner, so complicating interpretation of knockdown and expression experiments.</text>
</comment>
<name>EGL18_CAEEL</name>
<proteinExistence type="evidence at protein level"/>
<evidence type="ECO:0000255" key="1">
    <source>
        <dbReference type="PROSITE-ProRule" id="PRU00094"/>
    </source>
</evidence>
<evidence type="ECO:0000256" key="2">
    <source>
        <dbReference type="SAM" id="MobiDB-lite"/>
    </source>
</evidence>
<evidence type="ECO:0000269" key="3">
    <source>
    </source>
</evidence>
<evidence type="ECO:0000269" key="4">
    <source>
    </source>
</evidence>
<evidence type="ECO:0000269" key="5">
    <source>
    </source>
</evidence>
<evidence type="ECO:0000269" key="6">
    <source>
    </source>
</evidence>
<evidence type="ECO:0000269" key="7">
    <source>
    </source>
</evidence>
<evidence type="ECO:0000269" key="8">
    <source>
    </source>
</evidence>
<evidence type="ECO:0000303" key="9">
    <source>
    </source>
</evidence>
<evidence type="ECO:0000305" key="10"/>
<evidence type="ECO:0000312" key="11">
    <source>
        <dbReference type="EMBL" id="AAK32716.1"/>
    </source>
</evidence>
<evidence type="ECO:0000312" key="12">
    <source>
        <dbReference type="EMBL" id="AAR26006.1"/>
    </source>
</evidence>
<evidence type="ECO:0000312" key="13">
    <source>
        <dbReference type="Proteomes" id="UP000001940"/>
    </source>
</evidence>
<evidence type="ECO:0000312" key="14">
    <source>
        <dbReference type="WormBase" id="F55A8.1a"/>
    </source>
</evidence>
<evidence type="ECO:0000312" key="15">
    <source>
        <dbReference type="WormBase" id="F55A8.1b"/>
    </source>
</evidence>
<reference evidence="11" key="1">
    <citation type="journal article" date="2001" name="Development">
        <title>ELT-5 and ELT-6 are required continuously to regulate epidermal seam cell differentiation and cell fusion in C. elegans.</title>
        <authorList>
            <person name="Koh K."/>
            <person name="Rothman J.H."/>
        </authorList>
    </citation>
    <scope>NUCLEOTIDE SEQUENCE [MRNA]</scope>
    <scope>FUNCTION</scope>
    <scope>DEVELOPMENTAL STAGE</scope>
    <scope>DISRUPTION PHENOTYPE</scope>
</reference>
<reference evidence="12" key="2">
    <citation type="journal article" date="2004" name="Dev. Biol.">
        <title>The nT1 translocation separates vulval regulatory elements from the egl-18 and elt-6 GATA factor genes.</title>
        <authorList>
            <person name="Koh K."/>
            <person name="Bernstein Y."/>
            <person name="Sundaram M.V."/>
        </authorList>
    </citation>
    <scope>NUCLEOTIDE SEQUENCE [MRNA] OF 1-358</scope>
    <scope>FUNCTION</scope>
</reference>
<reference evidence="13" key="3">
    <citation type="journal article" date="1998" name="Science">
        <title>Genome sequence of the nematode C. elegans: a platform for investigating biology.</title>
        <authorList>
            <consortium name="The C. elegans sequencing consortium"/>
        </authorList>
    </citation>
    <scope>NUCLEOTIDE SEQUENCE [LARGE SCALE GENOMIC DNA]</scope>
    <source>
        <strain evidence="13">Bristol N2</strain>
    </source>
</reference>
<reference evidence="10" key="4">
    <citation type="journal article" date="2002" name="Development">
        <title>Cell fates and fusion in the C. elegans vulval primordium are regulated by the EGL-18 and ELT-6 GATA factors -- apparent direct targets of the LIN-39 Hox protein.</title>
        <authorList>
            <person name="Koh K."/>
            <person name="Peyrot S.M."/>
            <person name="Wood C.G."/>
            <person name="Wagmaister J.A."/>
            <person name="Maduro M.F."/>
            <person name="Eisenmann D.M."/>
            <person name="Rothman J.H."/>
        </authorList>
    </citation>
    <scope>FUNCTION</scope>
    <scope>DEVELOPMENTAL STAGE</scope>
    <scope>MUTAGENESIS OF 34-LYS--PHE-376; 193-ARG--PHE-376 AND 245-GLN--PHE-376</scope>
</reference>
<reference evidence="10" key="5">
    <citation type="journal article" date="2008" name="Cell">
        <title>An elt-3/elt-5/elt-6 GATA transcription circuit guides aging in C. elegans.</title>
        <authorList>
            <person name="Budovskaya Y.V."/>
            <person name="Wu K."/>
            <person name="Southworth L.K."/>
            <person name="Jiang M."/>
            <person name="Tedesco P."/>
            <person name="Johnson T.E."/>
            <person name="Kim S.K."/>
        </authorList>
    </citation>
    <scope>FUNCTION</scope>
    <scope>TISSUE SPECIFICITY</scope>
    <scope>DEVELOPMENTAL STAGE</scope>
    <scope>DISRUPTION PHENOTYPE</scope>
</reference>
<reference evidence="10" key="6">
    <citation type="journal article" date="2013" name="Development">
        <title>C. elegans GATA factors EGL-18 and ELT-6 function downstream of Wnt signaling to maintain the progenitor fate during larval asymmetric divisions of the seam cells.</title>
        <authorList>
            <person name="Gorrepati L."/>
            <person name="Thompson K.W."/>
            <person name="Eisenmann D.M."/>
        </authorList>
    </citation>
    <scope>FUNCTION</scope>
    <scope>TISSUE SPECIFICITY</scope>
    <scope>DEVELOPMENTAL STAGE</scope>
</reference>
<reference key="7">
    <citation type="journal article" date="2014" name="BMC Dev. Biol.">
        <title>Multiple transcription factors directly regulate Hox gene lin-39 expression in ventral hypodermal cells of the C. elegans embryo and larva, including the hypodermal fate regulators LIN-26 and ELT-6.</title>
        <authorList>
            <person name="Liu W.J."/>
            <person name="Reece-Hoyes J.S."/>
            <person name="Walhout A.J."/>
            <person name="Eisenmann D.M."/>
        </authorList>
    </citation>
    <scope>FUNCTION</scope>
    <scope>DISRUPTION PHENOTYPE</scope>
    <scope>MUTAGENESIS OF 193-ARG--PHE-376 AND 245-GLN--PHE-376</scope>
</reference>